<accession>A6NHS1</accession>
<reference key="1">
    <citation type="journal article" date="2006" name="Nature">
        <title>Human chromosome 11 DNA sequence and analysis including novel gene identification.</title>
        <authorList>
            <person name="Taylor T.D."/>
            <person name="Noguchi H."/>
            <person name="Totoki Y."/>
            <person name="Toyoda A."/>
            <person name="Kuroki Y."/>
            <person name="Dewar K."/>
            <person name="Lloyd C."/>
            <person name="Itoh T."/>
            <person name="Takeda T."/>
            <person name="Kim D.-W."/>
            <person name="She X."/>
            <person name="Barlow K.F."/>
            <person name="Bloom T."/>
            <person name="Bruford E."/>
            <person name="Chang J.L."/>
            <person name="Cuomo C.A."/>
            <person name="Eichler E."/>
            <person name="FitzGerald M.G."/>
            <person name="Jaffe D.B."/>
            <person name="LaButti K."/>
            <person name="Nicol R."/>
            <person name="Park H.-S."/>
            <person name="Seaman C."/>
            <person name="Sougnez C."/>
            <person name="Yang X."/>
            <person name="Zimmer A.R."/>
            <person name="Zody M.C."/>
            <person name="Birren B.W."/>
            <person name="Nusbaum C."/>
            <person name="Fujiyama A."/>
            <person name="Hattori M."/>
            <person name="Rogers J."/>
            <person name="Lander E.S."/>
            <person name="Sakaki Y."/>
        </authorList>
    </citation>
    <scope>NUCLEOTIDE SEQUENCE [LARGE SCALE GENOMIC DNA]</scope>
</reference>
<organism>
    <name type="scientific">Homo sapiens</name>
    <name type="common">Human</name>
    <dbReference type="NCBI Taxonomy" id="9606"/>
    <lineage>
        <taxon>Eukaryota</taxon>
        <taxon>Metazoa</taxon>
        <taxon>Chordata</taxon>
        <taxon>Craniata</taxon>
        <taxon>Vertebrata</taxon>
        <taxon>Euteleostomi</taxon>
        <taxon>Mammalia</taxon>
        <taxon>Eutheria</taxon>
        <taxon>Euarchontoglires</taxon>
        <taxon>Primates</taxon>
        <taxon>Haplorrhini</taxon>
        <taxon>Catarrhini</taxon>
        <taxon>Hominidae</taxon>
        <taxon>Homo</taxon>
    </lineage>
</organism>
<comment type="caution">
    <text evidence="2">Could be the product of a pseudogene.</text>
</comment>
<proteinExistence type="uncertain"/>
<sequence>MVLLAGTRPQGGEARCMIPPPPSPLLGAQVEEDRTEFKEFQDFSSLPDTRSVASDDSLYPFQDEEEHGVEGVESVPEEGILEAWGSCGRWCGVG</sequence>
<keyword id="KW-1185">Reference proteome</keyword>
<name>YK042_HUMAN</name>
<evidence type="ECO:0000256" key="1">
    <source>
        <dbReference type="SAM" id="MobiDB-lite"/>
    </source>
</evidence>
<evidence type="ECO:0000305" key="2"/>
<feature type="chain" id="PRO_0000342381" description="Putative uncharacterized protein ENSP00000347057">
    <location>
        <begin position="1"/>
        <end position="94"/>
    </location>
</feature>
<feature type="region of interest" description="Disordered" evidence="1">
    <location>
        <begin position="1"/>
        <end position="23"/>
    </location>
</feature>
<dbReference type="EMBL" id="AC084851">
    <property type="status" value="NOT_ANNOTATED_CDS"/>
    <property type="molecule type" value="Genomic_DNA"/>
</dbReference>
<dbReference type="BioMuta" id="-"/>
<dbReference type="neXtProt" id="NX_A6NHS1"/>
<dbReference type="InParanoid" id="A6NHS1"/>
<dbReference type="PAN-GO" id="A6NHS1">
    <property type="GO annotations" value="0 GO annotations based on evolutionary models"/>
</dbReference>
<dbReference type="PhylomeDB" id="A6NHS1"/>
<dbReference type="Pharos" id="A6NHS1">
    <property type="development level" value="Tdark"/>
</dbReference>
<dbReference type="Proteomes" id="UP000005640">
    <property type="component" value="Unplaced"/>
</dbReference>
<dbReference type="RNAct" id="A6NHS1">
    <property type="molecule type" value="protein"/>
</dbReference>
<protein>
    <recommendedName>
        <fullName>Putative uncharacterized protein ENSP00000347057</fullName>
    </recommendedName>
</protein>